<keyword id="KW-0028">Amino-acid biosynthesis</keyword>
<keyword id="KW-0963">Cytoplasm</keyword>
<keyword id="KW-0368">Histidine biosynthesis</keyword>
<keyword id="KW-0413">Isomerase</keyword>
<keyword id="KW-1185">Reference proteome</keyword>
<name>HIS4_ALCBS</name>
<feature type="chain" id="PRO_0000290444" description="1-(5-phosphoribosyl)-5-[(5-phosphoribosylamino)methylideneamino] imidazole-4-carboxamide isomerase">
    <location>
        <begin position="1"/>
        <end position="246"/>
    </location>
</feature>
<feature type="active site" description="Proton acceptor" evidence="1">
    <location>
        <position position="8"/>
    </location>
</feature>
<feature type="active site" description="Proton donor" evidence="1">
    <location>
        <position position="130"/>
    </location>
</feature>
<evidence type="ECO:0000255" key="1">
    <source>
        <dbReference type="HAMAP-Rule" id="MF_01014"/>
    </source>
</evidence>
<evidence type="ECO:0000305" key="2"/>
<protein>
    <recommendedName>
        <fullName evidence="1">1-(5-phosphoribosyl)-5-[(5-phosphoribosylamino)methylideneamino] imidazole-4-carboxamide isomerase</fullName>
        <ecNumber evidence="1">5.3.1.16</ecNumber>
    </recommendedName>
    <alternativeName>
        <fullName evidence="1">Phosphoribosylformimino-5-aminoimidazole carboxamide ribotide isomerase</fullName>
    </alternativeName>
</protein>
<accession>Q0VM71</accession>
<proteinExistence type="inferred from homology"/>
<reference key="1">
    <citation type="journal article" date="2006" name="Nat. Biotechnol.">
        <title>Genome sequence of the ubiquitous hydrocarbon-degrading marine bacterium Alcanivorax borkumensis.</title>
        <authorList>
            <person name="Schneiker S."/>
            <person name="Martins dos Santos V.A.P."/>
            <person name="Bartels D."/>
            <person name="Bekel T."/>
            <person name="Brecht M."/>
            <person name="Buhrmester J."/>
            <person name="Chernikova T.N."/>
            <person name="Denaro R."/>
            <person name="Ferrer M."/>
            <person name="Gertler C."/>
            <person name="Goesmann A."/>
            <person name="Golyshina O.V."/>
            <person name="Kaminski F."/>
            <person name="Khachane A.N."/>
            <person name="Lang S."/>
            <person name="Linke B."/>
            <person name="McHardy A.C."/>
            <person name="Meyer F."/>
            <person name="Nechitaylo T."/>
            <person name="Puehler A."/>
            <person name="Regenhardt D."/>
            <person name="Rupp O."/>
            <person name="Sabirova J.S."/>
            <person name="Selbitschka W."/>
            <person name="Yakimov M.M."/>
            <person name="Timmis K.N."/>
            <person name="Vorhoelter F.-J."/>
            <person name="Weidner S."/>
            <person name="Kaiser O."/>
            <person name="Golyshin P.N."/>
        </authorList>
    </citation>
    <scope>NUCLEOTIDE SEQUENCE [LARGE SCALE GENOMIC DNA]</scope>
    <source>
        <strain>ATCC 700651 / DSM 11573 / NCIMB 13689 / SK2</strain>
    </source>
</reference>
<organism>
    <name type="scientific">Alcanivorax borkumensis (strain ATCC 700651 / DSM 11573 / NCIMB 13689 / SK2)</name>
    <dbReference type="NCBI Taxonomy" id="393595"/>
    <lineage>
        <taxon>Bacteria</taxon>
        <taxon>Pseudomonadati</taxon>
        <taxon>Pseudomonadota</taxon>
        <taxon>Gammaproteobacteria</taxon>
        <taxon>Oceanospirillales</taxon>
        <taxon>Alcanivoracaceae</taxon>
        <taxon>Alcanivorax</taxon>
    </lineage>
</organism>
<dbReference type="EC" id="5.3.1.16" evidence="1"/>
<dbReference type="EMBL" id="AM286690">
    <property type="protein sequence ID" value="CAL17727.1"/>
    <property type="status" value="ALT_INIT"/>
    <property type="molecule type" value="Genomic_DNA"/>
</dbReference>
<dbReference type="RefSeq" id="WP_035459508.1">
    <property type="nucleotide sequence ID" value="NC_008260.1"/>
</dbReference>
<dbReference type="SMR" id="Q0VM71"/>
<dbReference type="STRING" id="393595.ABO_2279"/>
<dbReference type="KEGG" id="abo:ABO_2279"/>
<dbReference type="eggNOG" id="COG0106">
    <property type="taxonomic scope" value="Bacteria"/>
</dbReference>
<dbReference type="HOGENOM" id="CLU_048577_1_1_6"/>
<dbReference type="OrthoDB" id="9807749at2"/>
<dbReference type="UniPathway" id="UPA00031">
    <property type="reaction ID" value="UER00009"/>
</dbReference>
<dbReference type="Proteomes" id="UP000008871">
    <property type="component" value="Chromosome"/>
</dbReference>
<dbReference type="GO" id="GO:0005737">
    <property type="term" value="C:cytoplasm"/>
    <property type="evidence" value="ECO:0007669"/>
    <property type="project" value="UniProtKB-SubCell"/>
</dbReference>
<dbReference type="GO" id="GO:0003949">
    <property type="term" value="F:1-(5-phosphoribosyl)-5-[(5-phosphoribosylamino)methylideneamino]imidazole-4-carboxamide isomerase activity"/>
    <property type="evidence" value="ECO:0007669"/>
    <property type="project" value="UniProtKB-UniRule"/>
</dbReference>
<dbReference type="GO" id="GO:0000105">
    <property type="term" value="P:L-histidine biosynthetic process"/>
    <property type="evidence" value="ECO:0007669"/>
    <property type="project" value="UniProtKB-UniRule"/>
</dbReference>
<dbReference type="GO" id="GO:0000162">
    <property type="term" value="P:L-tryptophan biosynthetic process"/>
    <property type="evidence" value="ECO:0007669"/>
    <property type="project" value="TreeGrafter"/>
</dbReference>
<dbReference type="CDD" id="cd04732">
    <property type="entry name" value="HisA"/>
    <property type="match status" value="1"/>
</dbReference>
<dbReference type="FunFam" id="3.20.20.70:FF:000009">
    <property type="entry name" value="1-(5-phosphoribosyl)-5-[(5-phosphoribosylamino)methylideneamino] imidazole-4-carboxamide isomerase"/>
    <property type="match status" value="1"/>
</dbReference>
<dbReference type="Gene3D" id="3.20.20.70">
    <property type="entry name" value="Aldolase class I"/>
    <property type="match status" value="1"/>
</dbReference>
<dbReference type="HAMAP" id="MF_01014">
    <property type="entry name" value="HisA"/>
    <property type="match status" value="1"/>
</dbReference>
<dbReference type="InterPro" id="IPR013785">
    <property type="entry name" value="Aldolase_TIM"/>
</dbReference>
<dbReference type="InterPro" id="IPR006062">
    <property type="entry name" value="His_biosynth"/>
</dbReference>
<dbReference type="InterPro" id="IPR006063">
    <property type="entry name" value="HisA_bact_arch"/>
</dbReference>
<dbReference type="InterPro" id="IPR044524">
    <property type="entry name" value="Isoase_HisA-like"/>
</dbReference>
<dbReference type="InterPro" id="IPR023016">
    <property type="entry name" value="Isoase_HisA-like_bact"/>
</dbReference>
<dbReference type="InterPro" id="IPR011060">
    <property type="entry name" value="RibuloseP-bd_barrel"/>
</dbReference>
<dbReference type="NCBIfam" id="TIGR00007">
    <property type="entry name" value="1-(5-phosphoribosyl)-5-[(5-phosphoribosylamino)methylideneamino]imidazole-4-carboxamide isomerase"/>
    <property type="match status" value="1"/>
</dbReference>
<dbReference type="NCBIfam" id="NF010112">
    <property type="entry name" value="PRK13585.1"/>
    <property type="match status" value="1"/>
</dbReference>
<dbReference type="PANTHER" id="PTHR43090">
    <property type="entry name" value="1-(5-PHOSPHORIBOSYL)-5-[(5-PHOSPHORIBOSYLAMINO)METHYLIDENEAMINO] IMIDAZOLE-4-CARBOXAMIDE ISOMERASE"/>
    <property type="match status" value="1"/>
</dbReference>
<dbReference type="PANTHER" id="PTHR43090:SF2">
    <property type="entry name" value="1-(5-PHOSPHORIBOSYL)-5-[(5-PHOSPHORIBOSYLAMINO)METHYLIDENEAMINO] IMIDAZOLE-4-CARBOXAMIDE ISOMERASE"/>
    <property type="match status" value="1"/>
</dbReference>
<dbReference type="Pfam" id="PF00977">
    <property type="entry name" value="His_biosynth"/>
    <property type="match status" value="1"/>
</dbReference>
<dbReference type="SUPFAM" id="SSF51366">
    <property type="entry name" value="Ribulose-phoshate binding barrel"/>
    <property type="match status" value="1"/>
</dbReference>
<sequence length="246" mass="26018">MLLIPAIDLKDGKCVRLKQGRMEDDTVFSEDPVAVASHWVERGARRLHLVDLNGAFAGEPVNGDIVKAIAKAHPDLPIQIGGGIRSPEIIQAYLDAGVQWVIIGTKAVNEPAFVKAMCEQFPGHIIVGLDAKDGKVATDGWANVTDVDVIDLAKQFENDGVSAIVYTDISRDGMLQGVNVDATVRLAQSMSIPVIASGGITNLDDVRNLCAVADQGISGAITGRAIYENTLDFADGQALSDELSGA</sequence>
<gene>
    <name evidence="1" type="primary">hisA</name>
    <name type="ordered locus">ABO_2279</name>
</gene>
<comment type="catalytic activity">
    <reaction evidence="1">
        <text>1-(5-phospho-beta-D-ribosyl)-5-[(5-phospho-beta-D-ribosylamino)methylideneamino]imidazole-4-carboxamide = 5-[(5-phospho-1-deoxy-D-ribulos-1-ylimino)methylamino]-1-(5-phospho-beta-D-ribosyl)imidazole-4-carboxamide</text>
        <dbReference type="Rhea" id="RHEA:15469"/>
        <dbReference type="ChEBI" id="CHEBI:58435"/>
        <dbReference type="ChEBI" id="CHEBI:58525"/>
        <dbReference type="EC" id="5.3.1.16"/>
    </reaction>
</comment>
<comment type="pathway">
    <text evidence="1">Amino-acid biosynthesis; L-histidine biosynthesis; L-histidine from 5-phospho-alpha-D-ribose 1-diphosphate: step 4/9.</text>
</comment>
<comment type="subcellular location">
    <subcellularLocation>
        <location evidence="1">Cytoplasm</location>
    </subcellularLocation>
</comment>
<comment type="similarity">
    <text evidence="1">Belongs to the HisA/HisF family.</text>
</comment>
<comment type="sequence caution" evidence="2">
    <conflict type="erroneous initiation">
        <sequence resource="EMBL-CDS" id="CAL17727"/>
    </conflict>
</comment>